<gene>
    <name evidence="1" type="primary">pfkA</name>
    <name type="ordered locus">ECP_4125</name>
</gene>
<keyword id="KW-0021">Allosteric enzyme</keyword>
<keyword id="KW-0067">ATP-binding</keyword>
<keyword id="KW-0963">Cytoplasm</keyword>
<keyword id="KW-0324">Glycolysis</keyword>
<keyword id="KW-0418">Kinase</keyword>
<keyword id="KW-0460">Magnesium</keyword>
<keyword id="KW-0479">Metal-binding</keyword>
<keyword id="KW-0547">Nucleotide-binding</keyword>
<keyword id="KW-0808">Transferase</keyword>
<protein>
    <recommendedName>
        <fullName evidence="1">ATP-dependent 6-phosphofructokinase isozyme 1</fullName>
        <shortName evidence="1">ATP-PFK 1</shortName>
        <shortName evidence="1">Phosphofructokinase 1</shortName>
        <ecNumber evidence="1">2.7.1.11</ecNumber>
    </recommendedName>
    <alternativeName>
        <fullName>6-phosphofructokinase isozyme I</fullName>
    </alternativeName>
    <alternativeName>
        <fullName evidence="1">Phosphohexokinase 1</fullName>
    </alternativeName>
</protein>
<dbReference type="EC" id="2.7.1.11" evidence="1"/>
<dbReference type="EMBL" id="CP000247">
    <property type="protein sequence ID" value="ABG72081.1"/>
    <property type="molecule type" value="Genomic_DNA"/>
</dbReference>
<dbReference type="RefSeq" id="WP_000591795.1">
    <property type="nucleotide sequence ID" value="NC_008253.1"/>
</dbReference>
<dbReference type="SMR" id="Q0TAE8"/>
<dbReference type="GeneID" id="93777982"/>
<dbReference type="KEGG" id="ecp:ECP_4125"/>
<dbReference type="HOGENOM" id="CLU_020655_0_1_6"/>
<dbReference type="UniPathway" id="UPA00109">
    <property type="reaction ID" value="UER00182"/>
</dbReference>
<dbReference type="Proteomes" id="UP000009182">
    <property type="component" value="Chromosome"/>
</dbReference>
<dbReference type="GO" id="GO:0005945">
    <property type="term" value="C:6-phosphofructokinase complex"/>
    <property type="evidence" value="ECO:0007669"/>
    <property type="project" value="TreeGrafter"/>
</dbReference>
<dbReference type="GO" id="GO:0003872">
    <property type="term" value="F:6-phosphofructokinase activity"/>
    <property type="evidence" value="ECO:0007669"/>
    <property type="project" value="UniProtKB-UniRule"/>
</dbReference>
<dbReference type="GO" id="GO:0016208">
    <property type="term" value="F:AMP binding"/>
    <property type="evidence" value="ECO:0007669"/>
    <property type="project" value="TreeGrafter"/>
</dbReference>
<dbReference type="GO" id="GO:0005524">
    <property type="term" value="F:ATP binding"/>
    <property type="evidence" value="ECO:0007669"/>
    <property type="project" value="UniProtKB-KW"/>
</dbReference>
<dbReference type="GO" id="GO:0070095">
    <property type="term" value="F:fructose-6-phosphate binding"/>
    <property type="evidence" value="ECO:0007669"/>
    <property type="project" value="TreeGrafter"/>
</dbReference>
<dbReference type="GO" id="GO:0042802">
    <property type="term" value="F:identical protein binding"/>
    <property type="evidence" value="ECO:0007669"/>
    <property type="project" value="TreeGrafter"/>
</dbReference>
<dbReference type="GO" id="GO:0046872">
    <property type="term" value="F:metal ion binding"/>
    <property type="evidence" value="ECO:0007669"/>
    <property type="project" value="UniProtKB-KW"/>
</dbReference>
<dbReference type="GO" id="GO:0048029">
    <property type="term" value="F:monosaccharide binding"/>
    <property type="evidence" value="ECO:0007669"/>
    <property type="project" value="TreeGrafter"/>
</dbReference>
<dbReference type="GO" id="GO:0061621">
    <property type="term" value="P:canonical glycolysis"/>
    <property type="evidence" value="ECO:0007669"/>
    <property type="project" value="TreeGrafter"/>
</dbReference>
<dbReference type="GO" id="GO:0030388">
    <property type="term" value="P:fructose 1,6-bisphosphate metabolic process"/>
    <property type="evidence" value="ECO:0007669"/>
    <property type="project" value="TreeGrafter"/>
</dbReference>
<dbReference type="GO" id="GO:0006002">
    <property type="term" value="P:fructose 6-phosphate metabolic process"/>
    <property type="evidence" value="ECO:0007669"/>
    <property type="project" value="InterPro"/>
</dbReference>
<dbReference type="CDD" id="cd00763">
    <property type="entry name" value="Bacterial_PFK"/>
    <property type="match status" value="1"/>
</dbReference>
<dbReference type="FunFam" id="3.40.50.450:FF:000001">
    <property type="entry name" value="ATP-dependent 6-phosphofructokinase"/>
    <property type="match status" value="1"/>
</dbReference>
<dbReference type="FunFam" id="3.40.50.460:FF:000002">
    <property type="entry name" value="ATP-dependent 6-phosphofructokinase"/>
    <property type="match status" value="1"/>
</dbReference>
<dbReference type="Gene3D" id="3.40.50.450">
    <property type="match status" value="1"/>
</dbReference>
<dbReference type="Gene3D" id="3.40.50.460">
    <property type="entry name" value="Phosphofructokinase domain"/>
    <property type="match status" value="1"/>
</dbReference>
<dbReference type="HAMAP" id="MF_00339">
    <property type="entry name" value="Phosphofructokinase_I_B1"/>
    <property type="match status" value="1"/>
</dbReference>
<dbReference type="InterPro" id="IPR022953">
    <property type="entry name" value="ATP_PFK"/>
</dbReference>
<dbReference type="InterPro" id="IPR012003">
    <property type="entry name" value="ATP_PFK_prok-type"/>
</dbReference>
<dbReference type="InterPro" id="IPR012828">
    <property type="entry name" value="PFKA_ATP_prok"/>
</dbReference>
<dbReference type="InterPro" id="IPR015912">
    <property type="entry name" value="Phosphofructokinase_CS"/>
</dbReference>
<dbReference type="InterPro" id="IPR000023">
    <property type="entry name" value="Phosphofructokinase_dom"/>
</dbReference>
<dbReference type="InterPro" id="IPR035966">
    <property type="entry name" value="PKF_sf"/>
</dbReference>
<dbReference type="NCBIfam" id="TIGR02482">
    <property type="entry name" value="PFKA_ATP"/>
    <property type="match status" value="1"/>
</dbReference>
<dbReference type="NCBIfam" id="NF002872">
    <property type="entry name" value="PRK03202.1"/>
    <property type="match status" value="1"/>
</dbReference>
<dbReference type="PANTHER" id="PTHR13697:SF4">
    <property type="entry name" value="ATP-DEPENDENT 6-PHOSPHOFRUCTOKINASE"/>
    <property type="match status" value="1"/>
</dbReference>
<dbReference type="PANTHER" id="PTHR13697">
    <property type="entry name" value="PHOSPHOFRUCTOKINASE"/>
    <property type="match status" value="1"/>
</dbReference>
<dbReference type="Pfam" id="PF00365">
    <property type="entry name" value="PFK"/>
    <property type="match status" value="1"/>
</dbReference>
<dbReference type="PIRSF" id="PIRSF000532">
    <property type="entry name" value="ATP_PFK_prok"/>
    <property type="match status" value="1"/>
</dbReference>
<dbReference type="PRINTS" id="PR00476">
    <property type="entry name" value="PHFRCTKINASE"/>
</dbReference>
<dbReference type="SUPFAM" id="SSF53784">
    <property type="entry name" value="Phosphofructokinase"/>
    <property type="match status" value="1"/>
</dbReference>
<dbReference type="PROSITE" id="PS00433">
    <property type="entry name" value="PHOSPHOFRUCTOKINASE"/>
    <property type="match status" value="1"/>
</dbReference>
<organism>
    <name type="scientific">Escherichia coli O6:K15:H31 (strain 536 / UPEC)</name>
    <dbReference type="NCBI Taxonomy" id="362663"/>
    <lineage>
        <taxon>Bacteria</taxon>
        <taxon>Pseudomonadati</taxon>
        <taxon>Pseudomonadota</taxon>
        <taxon>Gammaproteobacteria</taxon>
        <taxon>Enterobacterales</taxon>
        <taxon>Enterobacteriaceae</taxon>
        <taxon>Escherichia</taxon>
    </lineage>
</organism>
<feature type="chain" id="PRO_1000059759" description="ATP-dependent 6-phosphofructokinase isozyme 1">
    <location>
        <begin position="1"/>
        <end position="320"/>
    </location>
</feature>
<feature type="active site" description="Proton acceptor" evidence="1">
    <location>
        <position position="128"/>
    </location>
</feature>
<feature type="binding site" evidence="1">
    <location>
        <position position="12"/>
    </location>
    <ligand>
        <name>ATP</name>
        <dbReference type="ChEBI" id="CHEBI:30616"/>
    </ligand>
</feature>
<feature type="binding site" evidence="1">
    <location>
        <begin position="22"/>
        <end position="26"/>
    </location>
    <ligand>
        <name>ADP</name>
        <dbReference type="ChEBI" id="CHEBI:456216"/>
        <note>allosteric activator; ligand shared between dimeric partners</note>
    </ligand>
</feature>
<feature type="binding site" evidence="1">
    <location>
        <begin position="55"/>
        <end position="60"/>
    </location>
    <ligand>
        <name>ADP</name>
        <dbReference type="ChEBI" id="CHEBI:456216"/>
        <note>allosteric activator; ligand shared between dimeric partners</note>
    </ligand>
</feature>
<feature type="binding site" evidence="1">
    <location>
        <begin position="73"/>
        <end position="74"/>
    </location>
    <ligand>
        <name>ATP</name>
        <dbReference type="ChEBI" id="CHEBI:30616"/>
    </ligand>
</feature>
<feature type="binding site" evidence="1">
    <location>
        <begin position="103"/>
        <end position="106"/>
    </location>
    <ligand>
        <name>ATP</name>
        <dbReference type="ChEBI" id="CHEBI:30616"/>
    </ligand>
</feature>
<feature type="binding site" evidence="1">
    <location>
        <position position="104"/>
    </location>
    <ligand>
        <name>Mg(2+)</name>
        <dbReference type="ChEBI" id="CHEBI:18420"/>
        <note>catalytic</note>
    </ligand>
</feature>
<feature type="binding site" description="in other chain" evidence="1">
    <location>
        <begin position="126"/>
        <end position="128"/>
    </location>
    <ligand>
        <name>substrate</name>
        <note>ligand shared between dimeric partners</note>
    </ligand>
</feature>
<feature type="binding site" description="in other chain" evidence="1">
    <location>
        <position position="155"/>
    </location>
    <ligand>
        <name>ADP</name>
        <dbReference type="ChEBI" id="CHEBI:456216"/>
        <note>allosteric activator; ligand shared between dimeric partners</note>
    </ligand>
</feature>
<feature type="binding site" evidence="1">
    <location>
        <position position="163"/>
    </location>
    <ligand>
        <name>substrate</name>
        <note>ligand shared between dimeric partners</note>
    </ligand>
</feature>
<feature type="binding site" description="in other chain" evidence="1">
    <location>
        <begin position="170"/>
        <end position="172"/>
    </location>
    <ligand>
        <name>substrate</name>
        <note>ligand shared between dimeric partners</note>
    </ligand>
</feature>
<feature type="binding site" description="in other chain" evidence="1">
    <location>
        <begin position="186"/>
        <end position="188"/>
    </location>
    <ligand>
        <name>ADP</name>
        <dbReference type="ChEBI" id="CHEBI:456216"/>
        <note>allosteric activator; ligand shared between dimeric partners</note>
    </ligand>
</feature>
<feature type="binding site" description="in other chain" evidence="1">
    <location>
        <position position="212"/>
    </location>
    <ligand>
        <name>ADP</name>
        <dbReference type="ChEBI" id="CHEBI:456216"/>
        <note>allosteric activator; ligand shared between dimeric partners</note>
    </ligand>
</feature>
<feature type="binding site" description="in other chain" evidence="1">
    <location>
        <begin position="214"/>
        <end position="216"/>
    </location>
    <ligand>
        <name>ADP</name>
        <dbReference type="ChEBI" id="CHEBI:456216"/>
        <note>allosteric activator; ligand shared between dimeric partners</note>
    </ligand>
</feature>
<feature type="binding site" description="in other chain" evidence="1">
    <location>
        <position position="223"/>
    </location>
    <ligand>
        <name>substrate</name>
        <note>ligand shared between dimeric partners</note>
    </ligand>
</feature>
<feature type="binding site" evidence="1">
    <location>
        <position position="244"/>
    </location>
    <ligand>
        <name>substrate</name>
        <note>ligand shared between dimeric partners</note>
    </ligand>
</feature>
<feature type="binding site" description="in other chain" evidence="1">
    <location>
        <begin position="250"/>
        <end position="253"/>
    </location>
    <ligand>
        <name>substrate</name>
        <note>ligand shared between dimeric partners</note>
    </ligand>
</feature>
<proteinExistence type="inferred from homology"/>
<evidence type="ECO:0000255" key="1">
    <source>
        <dbReference type="HAMAP-Rule" id="MF_00339"/>
    </source>
</evidence>
<reference key="1">
    <citation type="journal article" date="2006" name="Mol. Microbiol.">
        <title>Role of pathogenicity island-associated integrases in the genome plasticity of uropathogenic Escherichia coli strain 536.</title>
        <authorList>
            <person name="Hochhut B."/>
            <person name="Wilde C."/>
            <person name="Balling G."/>
            <person name="Middendorf B."/>
            <person name="Dobrindt U."/>
            <person name="Brzuszkiewicz E."/>
            <person name="Gottschalk G."/>
            <person name="Carniel E."/>
            <person name="Hacker J."/>
        </authorList>
    </citation>
    <scope>NUCLEOTIDE SEQUENCE [LARGE SCALE GENOMIC DNA]</scope>
    <source>
        <strain>536 / UPEC</strain>
    </source>
</reference>
<comment type="function">
    <text evidence="1">Catalyzes the phosphorylation of D-fructose 6-phosphate to fructose 1,6-bisphosphate by ATP, the first committing step of glycolysis.</text>
</comment>
<comment type="catalytic activity">
    <reaction evidence="1">
        <text>beta-D-fructose 6-phosphate + ATP = beta-D-fructose 1,6-bisphosphate + ADP + H(+)</text>
        <dbReference type="Rhea" id="RHEA:16109"/>
        <dbReference type="ChEBI" id="CHEBI:15378"/>
        <dbReference type="ChEBI" id="CHEBI:30616"/>
        <dbReference type="ChEBI" id="CHEBI:32966"/>
        <dbReference type="ChEBI" id="CHEBI:57634"/>
        <dbReference type="ChEBI" id="CHEBI:456216"/>
        <dbReference type="EC" id="2.7.1.11"/>
    </reaction>
</comment>
<comment type="cofactor">
    <cofactor evidence="1">
        <name>Mg(2+)</name>
        <dbReference type="ChEBI" id="CHEBI:18420"/>
    </cofactor>
</comment>
<comment type="activity regulation">
    <text evidence="1">Allosterically activated by ADP and other diphosphonucleosides, and allosterically inhibited by phosphoenolpyruvate.</text>
</comment>
<comment type="pathway">
    <text evidence="1">Carbohydrate degradation; glycolysis; D-glyceraldehyde 3-phosphate and glycerone phosphate from D-glucose: step 3/4.</text>
</comment>
<comment type="subunit">
    <text evidence="1">Homotetramer.</text>
</comment>
<comment type="subcellular location">
    <subcellularLocation>
        <location evidence="1">Cytoplasm</location>
    </subcellularLocation>
</comment>
<comment type="similarity">
    <text evidence="1">Belongs to the phosphofructokinase type A (PFKA) family. ATP-dependent PFK group I subfamily. Prokaryotic clade 'B1' sub-subfamily.</text>
</comment>
<sequence length="320" mass="34842">MIKKIGVLTSGGDAPGMNAAIRGVVRSALTEGLEVMGIYDGYLGLYEDRMVQLDRYSVSDMINRGGTFLGSARFPEFRDENIRAVAIENLKKRGIDALVVIGGDGSYMGAMRLTEMGFPCIGLPGTIDNDIKGTDYTIGFFTALSTVVEAIDRLRDTSSSHQRISVVEVMGRYCGDLTLAAAIAGGCEFVVVPEVEFSREDLVNEIKAGIAKGKKHAIVAITEHMCDVDELAHFIEKETGRETRATVLGHIQRGGSPVPYDRILASRMGAYAIDLLLAGYGGRCVGIQNEQLVHHDIIDAIENMKRPFKGDWLDCAKKLY</sequence>
<name>PFKA_ECOL5</name>
<accession>Q0TAE8</accession>